<name>ATPF1_AFIC5</name>
<protein>
    <recommendedName>
        <fullName evidence="1">ATP synthase subunit b 1</fullName>
    </recommendedName>
    <alternativeName>
        <fullName evidence="1">ATP synthase F(0) sector subunit b 1</fullName>
    </alternativeName>
    <alternativeName>
        <fullName evidence="1">ATPase subunit I 1</fullName>
    </alternativeName>
    <alternativeName>
        <fullName evidence="1">F-type ATPase subunit b 1</fullName>
        <shortName evidence="1">F-ATPase subunit b 1</shortName>
    </alternativeName>
</protein>
<organism>
    <name type="scientific">Afipia carboxidovorans (strain ATCC 49405 / DSM 1227 / KCTC 32145 / OM5)</name>
    <name type="common">Oligotropha carboxidovorans</name>
    <dbReference type="NCBI Taxonomy" id="504832"/>
    <lineage>
        <taxon>Bacteria</taxon>
        <taxon>Pseudomonadati</taxon>
        <taxon>Pseudomonadota</taxon>
        <taxon>Alphaproteobacteria</taxon>
        <taxon>Hyphomicrobiales</taxon>
        <taxon>Nitrobacteraceae</taxon>
        <taxon>Afipia</taxon>
    </lineage>
</organism>
<keyword id="KW-0066">ATP synthesis</keyword>
<keyword id="KW-0997">Cell inner membrane</keyword>
<keyword id="KW-1003">Cell membrane</keyword>
<keyword id="KW-0138">CF(0)</keyword>
<keyword id="KW-0375">Hydrogen ion transport</keyword>
<keyword id="KW-0406">Ion transport</keyword>
<keyword id="KW-0472">Membrane</keyword>
<keyword id="KW-1185">Reference proteome</keyword>
<keyword id="KW-0812">Transmembrane</keyword>
<keyword id="KW-1133">Transmembrane helix</keyword>
<keyword id="KW-0813">Transport</keyword>
<gene>
    <name evidence="1" type="primary">atpF1</name>
    <name type="ordered locus">OCAR_4697</name>
    <name type="ordered locus">OCA5_c32530</name>
</gene>
<evidence type="ECO:0000255" key="1">
    <source>
        <dbReference type="HAMAP-Rule" id="MF_01398"/>
    </source>
</evidence>
<reference key="1">
    <citation type="journal article" date="2008" name="J. Bacteriol.">
        <title>Genome sequence of the chemolithoautotrophic bacterium Oligotropha carboxidovorans OM5T.</title>
        <authorList>
            <person name="Paul D."/>
            <person name="Bridges S."/>
            <person name="Burgess S.C."/>
            <person name="Dandass Y."/>
            <person name="Lawrence M.L."/>
        </authorList>
    </citation>
    <scope>NUCLEOTIDE SEQUENCE [LARGE SCALE GENOMIC DNA]</scope>
    <source>
        <strain>ATCC 49405 / DSM 1227 / KCTC 32145 / OM5</strain>
    </source>
</reference>
<reference key="2">
    <citation type="journal article" date="2011" name="J. Bacteriol.">
        <title>Complete genome sequences of the chemolithoautotrophic Oligotropha carboxidovorans strains OM4 and OM5.</title>
        <authorList>
            <person name="Volland S."/>
            <person name="Rachinger M."/>
            <person name="Strittmatter A."/>
            <person name="Daniel R."/>
            <person name="Gottschalk G."/>
            <person name="Meyer O."/>
        </authorList>
    </citation>
    <scope>NUCLEOTIDE SEQUENCE [LARGE SCALE GENOMIC DNA]</scope>
    <source>
        <strain>ATCC 49405 / DSM 1227 / KCTC 32145 / OM5</strain>
    </source>
</reference>
<comment type="function">
    <text evidence="1">F(1)F(0) ATP synthase produces ATP from ADP in the presence of a proton or sodium gradient. F-type ATPases consist of two structural domains, F(1) containing the extramembraneous catalytic core and F(0) containing the membrane proton channel, linked together by a central stalk and a peripheral stalk. During catalysis, ATP synthesis in the catalytic domain of F(1) is coupled via a rotary mechanism of the central stalk subunits to proton translocation.</text>
</comment>
<comment type="function">
    <text evidence="1">Component of the F(0) channel, it forms part of the peripheral stalk, linking F(1) to F(0).</text>
</comment>
<comment type="subunit">
    <text evidence="1">F-type ATPases have 2 components, F(1) - the catalytic core - and F(0) - the membrane proton channel. F(1) has five subunits: alpha(3), beta(3), gamma(1), delta(1), epsilon(1). F(0) has three main subunits: a(1), b(2) and c(10-14). The alpha and beta chains form an alternating ring which encloses part of the gamma chain. F(1) is attached to F(0) by a central stalk formed by the gamma and epsilon chains, while a peripheral stalk is formed by the delta and b chains.</text>
</comment>
<comment type="subcellular location">
    <subcellularLocation>
        <location evidence="1">Cell inner membrane</location>
        <topology evidence="1">Single-pass membrane protein</topology>
    </subcellularLocation>
</comment>
<comment type="similarity">
    <text evidence="1">Belongs to the ATPase B chain family.</text>
</comment>
<feature type="chain" id="PRO_0000368640" description="ATP synthase subunit b 1">
    <location>
        <begin position="1"/>
        <end position="161"/>
    </location>
</feature>
<feature type="transmembrane region" description="Helical" evidence="1">
    <location>
        <begin position="5"/>
        <end position="25"/>
    </location>
</feature>
<dbReference type="EMBL" id="CP001196">
    <property type="protein sequence ID" value="ACI91839.1"/>
    <property type="molecule type" value="Genomic_DNA"/>
</dbReference>
<dbReference type="EMBL" id="CP002826">
    <property type="protein sequence ID" value="AEI07929.1"/>
    <property type="molecule type" value="Genomic_DNA"/>
</dbReference>
<dbReference type="RefSeq" id="WP_012561870.1">
    <property type="nucleotide sequence ID" value="NC_015684.1"/>
</dbReference>
<dbReference type="SMR" id="B6JDC7"/>
<dbReference type="STRING" id="504832.OCA5_c32530"/>
<dbReference type="KEGG" id="oca:OCAR_4697"/>
<dbReference type="KEGG" id="ocg:OCA5_c32530"/>
<dbReference type="PATRIC" id="fig|504832.7.peg.3420"/>
<dbReference type="eggNOG" id="COG0711">
    <property type="taxonomic scope" value="Bacteria"/>
</dbReference>
<dbReference type="HOGENOM" id="CLU_079215_6_1_5"/>
<dbReference type="OrthoDB" id="8479836at2"/>
<dbReference type="Proteomes" id="UP000007730">
    <property type="component" value="Chromosome"/>
</dbReference>
<dbReference type="GO" id="GO:0005886">
    <property type="term" value="C:plasma membrane"/>
    <property type="evidence" value="ECO:0007669"/>
    <property type="project" value="UniProtKB-SubCell"/>
</dbReference>
<dbReference type="GO" id="GO:0045259">
    <property type="term" value="C:proton-transporting ATP synthase complex"/>
    <property type="evidence" value="ECO:0007669"/>
    <property type="project" value="UniProtKB-KW"/>
</dbReference>
<dbReference type="GO" id="GO:0046933">
    <property type="term" value="F:proton-transporting ATP synthase activity, rotational mechanism"/>
    <property type="evidence" value="ECO:0007669"/>
    <property type="project" value="UniProtKB-UniRule"/>
</dbReference>
<dbReference type="GO" id="GO:0046961">
    <property type="term" value="F:proton-transporting ATPase activity, rotational mechanism"/>
    <property type="evidence" value="ECO:0007669"/>
    <property type="project" value="TreeGrafter"/>
</dbReference>
<dbReference type="CDD" id="cd06503">
    <property type="entry name" value="ATP-synt_Fo_b"/>
    <property type="match status" value="1"/>
</dbReference>
<dbReference type="HAMAP" id="MF_01398">
    <property type="entry name" value="ATP_synth_b_bprime"/>
    <property type="match status" value="1"/>
</dbReference>
<dbReference type="InterPro" id="IPR002146">
    <property type="entry name" value="ATP_synth_b/b'su_bac/chlpt"/>
</dbReference>
<dbReference type="InterPro" id="IPR050059">
    <property type="entry name" value="ATP_synthase_B_chain"/>
</dbReference>
<dbReference type="PANTHER" id="PTHR33445:SF1">
    <property type="entry name" value="ATP SYNTHASE SUBUNIT B"/>
    <property type="match status" value="1"/>
</dbReference>
<dbReference type="PANTHER" id="PTHR33445">
    <property type="entry name" value="ATP SYNTHASE SUBUNIT B', CHLOROPLASTIC"/>
    <property type="match status" value="1"/>
</dbReference>
<dbReference type="Pfam" id="PF00430">
    <property type="entry name" value="ATP-synt_B"/>
    <property type="match status" value="1"/>
</dbReference>
<proteinExistence type="inferred from homology"/>
<sequence>MLHEAETWVAVAFVLMVALFIYFGAHRMIGEALDRRSARIRKELDDARQLKEEAQKLVAEYRSRRESAEREAQEIVAAAQADAERIAQEAKAKMEDFVARRTKAAESKIAQAETQAVADVRAAAAEAAAAAAANVLSQTVKGSIADNLIEKSIRELGGKLN</sequence>
<accession>B6JDC7</accession>
<accession>F8BSK1</accession>